<gene>
    <name evidence="1" type="primary">ppnP</name>
    <name type="ordered locus">Shew185_0265</name>
</gene>
<name>PPNP_SHEB8</name>
<comment type="function">
    <text evidence="1">Catalyzes the phosphorolysis of diverse nucleosides, yielding D-ribose 1-phosphate and the respective free bases. Can use uridine, adenosine, guanosine, cytidine, thymidine, inosine and xanthosine as substrates. Also catalyzes the reverse reactions.</text>
</comment>
<comment type="catalytic activity">
    <reaction evidence="1">
        <text>a purine D-ribonucleoside + phosphate = a purine nucleobase + alpha-D-ribose 1-phosphate</text>
        <dbReference type="Rhea" id="RHEA:19805"/>
        <dbReference type="ChEBI" id="CHEBI:26386"/>
        <dbReference type="ChEBI" id="CHEBI:43474"/>
        <dbReference type="ChEBI" id="CHEBI:57720"/>
        <dbReference type="ChEBI" id="CHEBI:142355"/>
        <dbReference type="EC" id="2.4.2.1"/>
    </reaction>
</comment>
<comment type="catalytic activity">
    <reaction evidence="1">
        <text>adenosine + phosphate = alpha-D-ribose 1-phosphate + adenine</text>
        <dbReference type="Rhea" id="RHEA:27642"/>
        <dbReference type="ChEBI" id="CHEBI:16335"/>
        <dbReference type="ChEBI" id="CHEBI:16708"/>
        <dbReference type="ChEBI" id="CHEBI:43474"/>
        <dbReference type="ChEBI" id="CHEBI:57720"/>
        <dbReference type="EC" id="2.4.2.1"/>
    </reaction>
</comment>
<comment type="catalytic activity">
    <reaction evidence="1">
        <text>cytidine + phosphate = cytosine + alpha-D-ribose 1-phosphate</text>
        <dbReference type="Rhea" id="RHEA:52540"/>
        <dbReference type="ChEBI" id="CHEBI:16040"/>
        <dbReference type="ChEBI" id="CHEBI:17562"/>
        <dbReference type="ChEBI" id="CHEBI:43474"/>
        <dbReference type="ChEBI" id="CHEBI:57720"/>
        <dbReference type="EC" id="2.4.2.2"/>
    </reaction>
</comment>
<comment type="catalytic activity">
    <reaction evidence="1">
        <text>guanosine + phosphate = alpha-D-ribose 1-phosphate + guanine</text>
        <dbReference type="Rhea" id="RHEA:13233"/>
        <dbReference type="ChEBI" id="CHEBI:16235"/>
        <dbReference type="ChEBI" id="CHEBI:16750"/>
        <dbReference type="ChEBI" id="CHEBI:43474"/>
        <dbReference type="ChEBI" id="CHEBI:57720"/>
        <dbReference type="EC" id="2.4.2.1"/>
    </reaction>
</comment>
<comment type="catalytic activity">
    <reaction evidence="1">
        <text>inosine + phosphate = alpha-D-ribose 1-phosphate + hypoxanthine</text>
        <dbReference type="Rhea" id="RHEA:27646"/>
        <dbReference type="ChEBI" id="CHEBI:17368"/>
        <dbReference type="ChEBI" id="CHEBI:17596"/>
        <dbReference type="ChEBI" id="CHEBI:43474"/>
        <dbReference type="ChEBI" id="CHEBI:57720"/>
        <dbReference type="EC" id="2.4.2.1"/>
    </reaction>
</comment>
<comment type="catalytic activity">
    <reaction evidence="1">
        <text>thymidine + phosphate = 2-deoxy-alpha-D-ribose 1-phosphate + thymine</text>
        <dbReference type="Rhea" id="RHEA:16037"/>
        <dbReference type="ChEBI" id="CHEBI:17748"/>
        <dbReference type="ChEBI" id="CHEBI:17821"/>
        <dbReference type="ChEBI" id="CHEBI:43474"/>
        <dbReference type="ChEBI" id="CHEBI:57259"/>
        <dbReference type="EC" id="2.4.2.2"/>
    </reaction>
</comment>
<comment type="catalytic activity">
    <reaction evidence="1">
        <text>uridine + phosphate = alpha-D-ribose 1-phosphate + uracil</text>
        <dbReference type="Rhea" id="RHEA:24388"/>
        <dbReference type="ChEBI" id="CHEBI:16704"/>
        <dbReference type="ChEBI" id="CHEBI:17568"/>
        <dbReference type="ChEBI" id="CHEBI:43474"/>
        <dbReference type="ChEBI" id="CHEBI:57720"/>
        <dbReference type="EC" id="2.4.2.2"/>
    </reaction>
</comment>
<comment type="catalytic activity">
    <reaction evidence="1">
        <text>xanthosine + phosphate = alpha-D-ribose 1-phosphate + xanthine</text>
        <dbReference type="Rhea" id="RHEA:27638"/>
        <dbReference type="ChEBI" id="CHEBI:17712"/>
        <dbReference type="ChEBI" id="CHEBI:18107"/>
        <dbReference type="ChEBI" id="CHEBI:43474"/>
        <dbReference type="ChEBI" id="CHEBI:57720"/>
        <dbReference type="EC" id="2.4.2.1"/>
    </reaction>
</comment>
<comment type="similarity">
    <text evidence="1">Belongs to the nucleoside phosphorylase PpnP family.</text>
</comment>
<feature type="chain" id="PRO_1000068738" description="Pyrimidine/purine nucleoside phosphorylase">
    <location>
        <begin position="1"/>
        <end position="103"/>
    </location>
</feature>
<evidence type="ECO:0000255" key="1">
    <source>
        <dbReference type="HAMAP-Rule" id="MF_01537"/>
    </source>
</evidence>
<organism>
    <name type="scientific">Shewanella baltica (strain OS185)</name>
    <dbReference type="NCBI Taxonomy" id="402882"/>
    <lineage>
        <taxon>Bacteria</taxon>
        <taxon>Pseudomonadati</taxon>
        <taxon>Pseudomonadota</taxon>
        <taxon>Gammaproteobacteria</taxon>
        <taxon>Alteromonadales</taxon>
        <taxon>Shewanellaceae</taxon>
        <taxon>Shewanella</taxon>
    </lineage>
</organism>
<dbReference type="EC" id="2.4.2.1" evidence="1"/>
<dbReference type="EC" id="2.4.2.2" evidence="1"/>
<dbReference type="EMBL" id="CP000753">
    <property type="protein sequence ID" value="ABS06436.1"/>
    <property type="molecule type" value="Genomic_DNA"/>
</dbReference>
<dbReference type="RefSeq" id="WP_011845529.1">
    <property type="nucleotide sequence ID" value="NC_009665.1"/>
</dbReference>
<dbReference type="SMR" id="A6WHZ7"/>
<dbReference type="KEGG" id="sbm:Shew185_0265"/>
<dbReference type="HOGENOM" id="CLU_157874_1_0_6"/>
<dbReference type="GO" id="GO:0005829">
    <property type="term" value="C:cytosol"/>
    <property type="evidence" value="ECO:0007669"/>
    <property type="project" value="TreeGrafter"/>
</dbReference>
<dbReference type="GO" id="GO:0047975">
    <property type="term" value="F:guanosine phosphorylase activity"/>
    <property type="evidence" value="ECO:0007669"/>
    <property type="project" value="UniProtKB-EC"/>
</dbReference>
<dbReference type="GO" id="GO:0004731">
    <property type="term" value="F:purine-nucleoside phosphorylase activity"/>
    <property type="evidence" value="ECO:0007669"/>
    <property type="project" value="UniProtKB-UniRule"/>
</dbReference>
<dbReference type="GO" id="GO:0009032">
    <property type="term" value="F:thymidine phosphorylase activity"/>
    <property type="evidence" value="ECO:0007669"/>
    <property type="project" value="UniProtKB-EC"/>
</dbReference>
<dbReference type="GO" id="GO:0004850">
    <property type="term" value="F:uridine phosphorylase activity"/>
    <property type="evidence" value="ECO:0007669"/>
    <property type="project" value="UniProtKB-EC"/>
</dbReference>
<dbReference type="CDD" id="cd20296">
    <property type="entry name" value="cupin_PpnP-like"/>
    <property type="match status" value="1"/>
</dbReference>
<dbReference type="FunFam" id="2.60.120.10:FF:000016">
    <property type="entry name" value="Pyrimidine/purine nucleoside phosphorylase"/>
    <property type="match status" value="1"/>
</dbReference>
<dbReference type="Gene3D" id="2.60.120.10">
    <property type="entry name" value="Jelly Rolls"/>
    <property type="match status" value="1"/>
</dbReference>
<dbReference type="HAMAP" id="MF_01537">
    <property type="entry name" value="Nucleos_phosphorylase_PpnP"/>
    <property type="match status" value="1"/>
</dbReference>
<dbReference type="InterPro" id="IPR009664">
    <property type="entry name" value="Ppnp"/>
</dbReference>
<dbReference type="InterPro" id="IPR014710">
    <property type="entry name" value="RmlC-like_jellyroll"/>
</dbReference>
<dbReference type="InterPro" id="IPR011051">
    <property type="entry name" value="RmlC_Cupin_sf"/>
</dbReference>
<dbReference type="PANTHER" id="PTHR36540">
    <property type="entry name" value="PYRIMIDINE/PURINE NUCLEOSIDE PHOSPHORYLASE"/>
    <property type="match status" value="1"/>
</dbReference>
<dbReference type="PANTHER" id="PTHR36540:SF1">
    <property type="entry name" value="PYRIMIDINE_PURINE NUCLEOSIDE PHOSPHORYLASE"/>
    <property type="match status" value="1"/>
</dbReference>
<dbReference type="Pfam" id="PF06865">
    <property type="entry name" value="Ppnp"/>
    <property type="match status" value="1"/>
</dbReference>
<dbReference type="SUPFAM" id="SSF51182">
    <property type="entry name" value="RmlC-like cupins"/>
    <property type="match status" value="1"/>
</dbReference>
<reference key="1">
    <citation type="submission" date="2007-07" db="EMBL/GenBank/DDBJ databases">
        <title>Complete sequence of chromosome of Shewanella baltica OS185.</title>
        <authorList>
            <consortium name="US DOE Joint Genome Institute"/>
            <person name="Copeland A."/>
            <person name="Lucas S."/>
            <person name="Lapidus A."/>
            <person name="Barry K."/>
            <person name="Glavina del Rio T."/>
            <person name="Dalin E."/>
            <person name="Tice H."/>
            <person name="Pitluck S."/>
            <person name="Sims D."/>
            <person name="Brettin T."/>
            <person name="Bruce D."/>
            <person name="Detter J.C."/>
            <person name="Han C."/>
            <person name="Schmutz J."/>
            <person name="Larimer F."/>
            <person name="Land M."/>
            <person name="Hauser L."/>
            <person name="Kyrpides N."/>
            <person name="Mikhailova N."/>
            <person name="Brettar I."/>
            <person name="Rodrigues J."/>
            <person name="Konstantinidis K."/>
            <person name="Tiedje J."/>
            <person name="Richardson P."/>
        </authorList>
    </citation>
    <scope>NUCLEOTIDE SEQUENCE [LARGE SCALE GENOMIC DNA]</scope>
    <source>
        <strain>OS185</strain>
    </source>
</reference>
<proteinExistence type="inferred from homology"/>
<accession>A6WHZ7</accession>
<protein>
    <recommendedName>
        <fullName evidence="1">Pyrimidine/purine nucleoside phosphorylase</fullName>
        <ecNumber evidence="1">2.4.2.1</ecNumber>
        <ecNumber evidence="1">2.4.2.2</ecNumber>
    </recommendedName>
    <alternativeName>
        <fullName evidence="1">Adenosine phosphorylase</fullName>
    </alternativeName>
    <alternativeName>
        <fullName evidence="1">Cytidine phosphorylase</fullName>
    </alternativeName>
    <alternativeName>
        <fullName evidence="1">Guanosine phosphorylase</fullName>
    </alternativeName>
    <alternativeName>
        <fullName evidence="1">Inosine phosphorylase</fullName>
    </alternativeName>
    <alternativeName>
        <fullName evidence="1">Thymidine phosphorylase</fullName>
    </alternativeName>
    <alternativeName>
        <fullName evidence="1">Uridine phosphorylase</fullName>
    </alternativeName>
    <alternativeName>
        <fullName evidence="1">Xanthosine phosphorylase</fullName>
    </alternativeName>
</protein>
<sequence>MSLLEQVSVSKKANIYFDGRVASRSVFFADGSKQTLGVVQPGEYEFSTSQGEIMEVISGRFEVLLPETTTWQEFSEGTQFELAANVSFKIRNTAIAEYCCSYL</sequence>
<keyword id="KW-0328">Glycosyltransferase</keyword>
<keyword id="KW-0808">Transferase</keyword>